<gene>
    <name type="primary">Slc15a1</name>
    <name evidence="11" type="synonym">Pept1</name>
</gene>
<name>S15A1_RAT</name>
<organism>
    <name type="scientific">Rattus norvegicus</name>
    <name type="common">Rat</name>
    <dbReference type="NCBI Taxonomy" id="10116"/>
    <lineage>
        <taxon>Eukaryota</taxon>
        <taxon>Metazoa</taxon>
        <taxon>Chordata</taxon>
        <taxon>Craniata</taxon>
        <taxon>Vertebrata</taxon>
        <taxon>Euteleostomi</taxon>
        <taxon>Mammalia</taxon>
        <taxon>Eutheria</taxon>
        <taxon>Euarchontoglires</taxon>
        <taxon>Glires</taxon>
        <taxon>Rodentia</taxon>
        <taxon>Myomorpha</taxon>
        <taxon>Muroidea</taxon>
        <taxon>Muridae</taxon>
        <taxon>Murinae</taxon>
        <taxon>Rattus</taxon>
    </lineage>
</organism>
<sequence>MGMSKSRGCFGYPLSIFFIVVNEFCERFSYYGMRALLVLYFRNFLGWDDDLSTAIYHTFVALCYLTPILGALIADSWLGKFKTIVSLSIVYTIGQAVISVSSINDLTDHDHDGSPNNLPLHVALSMIGLALIALGTGGIKPCVSAFGGDQFEEGQEKQRNRFFSIFYLAINAGSLLSTIITPILRVQQCGIHSQQACYPLAFGVPAALMAVALIVFVLGSGMYKKFQPQGNIMGKVAKCIRFAIKNRFRHRSKAFPKRNHWLDWAKEKYDERLISQIKIMTKVMFLYIPLPMFWALFDQQGSRWTLQATTMTGKIGTIEIQPDQMQTVNAILIVIMVPIVDAVVYPLIAKCGFNFTSLKKMTVGMFLASMAFVVAAIVQVEIDKTLPVFPSGNQVQIKVLNIGNNDMAVYFPGKNVTVAQMSQTDTFMTFDVDQLTSINVSSPGSPGVTTVAHEFEPGHRHTLLVWGPNLYRVVKDGLNQKPEKGENGIRFVSTLNEMITIKMSGKVYENVTSHSASNYQFFPSGQKDYTINTTEIAPNCSSDFKSSNLDFGSAYTYVIRSRASDGCLEVKEFEDIPPNTVNMALQIPQYFLLTCGEVVFSVTGLEFSYSQAPSNMKSVLQAGWLLTVAIGNIIVLIVAEAGHFDKQWAEYVLFASLLLVVCIIFAIMARFYTYINPAEIEAQFDEDEKKKGVGKENPYSSLEPVSQTNM</sequence>
<evidence type="ECO:0000250" key="1">
    <source>
        <dbReference type="UniProtKB" id="P36836"/>
    </source>
</evidence>
<evidence type="ECO:0000250" key="2">
    <source>
        <dbReference type="UniProtKB" id="P46059"/>
    </source>
</evidence>
<evidence type="ECO:0000250" key="3">
    <source>
        <dbReference type="UniProtKB" id="Q9JIP7"/>
    </source>
</evidence>
<evidence type="ECO:0000255" key="4"/>
<evidence type="ECO:0000256" key="5">
    <source>
        <dbReference type="SAM" id="MobiDB-lite"/>
    </source>
</evidence>
<evidence type="ECO:0000269" key="6">
    <source>
    </source>
</evidence>
<evidence type="ECO:0000269" key="7">
    <source>
    </source>
</evidence>
<evidence type="ECO:0000269" key="8">
    <source>
    </source>
</evidence>
<evidence type="ECO:0000269" key="9">
    <source>
    </source>
</evidence>
<evidence type="ECO:0000303" key="10">
    <source>
    </source>
</evidence>
<evidence type="ECO:0000303" key="11">
    <source>
    </source>
</evidence>
<evidence type="ECO:0000305" key="12"/>
<dbReference type="EMBL" id="D50664">
    <property type="protein sequence ID" value="BAA09318.1"/>
    <property type="molecule type" value="mRNA"/>
</dbReference>
<dbReference type="EMBL" id="D50306">
    <property type="protein sequence ID" value="BAA08844.1"/>
    <property type="molecule type" value="mRNA"/>
</dbReference>
<dbReference type="EMBL" id="AY860424">
    <property type="protein sequence ID" value="AAW80389.1"/>
    <property type="molecule type" value="mRNA"/>
</dbReference>
<dbReference type="PIR" id="S72497">
    <property type="entry name" value="S72497"/>
</dbReference>
<dbReference type="RefSeq" id="NP_001073307.1">
    <molecule id="P51574-2"/>
    <property type="nucleotide sequence ID" value="NM_001079838.1"/>
</dbReference>
<dbReference type="RefSeq" id="NP_476462.1">
    <property type="nucleotide sequence ID" value="NM_057121.1"/>
</dbReference>
<dbReference type="SMR" id="P51574"/>
<dbReference type="FunCoup" id="P51574">
    <property type="interactions" value="105"/>
</dbReference>
<dbReference type="STRING" id="10116.ENSRNOP00000015890"/>
<dbReference type="BindingDB" id="P51574"/>
<dbReference type="ChEMBL" id="CHEMBL2073691"/>
<dbReference type="TCDB" id="2.A.17.4.1">
    <property type="family name" value="the proton-dependent oligopeptide transporter (pot/ptr) family"/>
</dbReference>
<dbReference type="GlyCosmos" id="P51574">
    <property type="glycosylation" value="5 sites, No reported glycans"/>
</dbReference>
<dbReference type="GlyGen" id="P51574">
    <property type="glycosylation" value="5 sites"/>
</dbReference>
<dbReference type="PhosphoSitePlus" id="P51574"/>
<dbReference type="PaxDb" id="10116-ENSRNOP00000015890"/>
<dbReference type="GeneID" id="117261"/>
<dbReference type="KEGG" id="rno:117261"/>
<dbReference type="AGR" id="RGD:621736"/>
<dbReference type="CTD" id="6564"/>
<dbReference type="RGD" id="621736">
    <property type="gene designation" value="Slc15a1"/>
</dbReference>
<dbReference type="eggNOG" id="KOG1237">
    <property type="taxonomic scope" value="Eukaryota"/>
</dbReference>
<dbReference type="InParanoid" id="P51574"/>
<dbReference type="OrthoDB" id="10071041at2759"/>
<dbReference type="PhylomeDB" id="P51574"/>
<dbReference type="Reactome" id="R-RNO-427975">
    <property type="pathway name" value="Proton/oligopeptide cotransporters"/>
</dbReference>
<dbReference type="PRO" id="PR:P51574"/>
<dbReference type="Proteomes" id="UP000002494">
    <property type="component" value="Unplaced"/>
</dbReference>
<dbReference type="GO" id="GO:0016324">
    <property type="term" value="C:apical plasma membrane"/>
    <property type="evidence" value="ECO:0000314"/>
    <property type="project" value="ARUK-UCL"/>
</dbReference>
<dbReference type="GO" id="GO:0005903">
    <property type="term" value="C:brush border"/>
    <property type="evidence" value="ECO:0000266"/>
    <property type="project" value="RGD"/>
</dbReference>
<dbReference type="GO" id="GO:0016020">
    <property type="term" value="C:membrane"/>
    <property type="evidence" value="ECO:0000266"/>
    <property type="project" value="RGD"/>
</dbReference>
<dbReference type="GO" id="GO:0005886">
    <property type="term" value="C:plasma membrane"/>
    <property type="evidence" value="ECO:0000266"/>
    <property type="project" value="RGD"/>
</dbReference>
<dbReference type="GO" id="GO:0016248">
    <property type="term" value="F:channel inhibitor activity"/>
    <property type="evidence" value="ECO:0000314"/>
    <property type="project" value="RGD"/>
</dbReference>
<dbReference type="GO" id="GO:0071916">
    <property type="term" value="F:dipeptide transmembrane transporter activity"/>
    <property type="evidence" value="ECO:0000250"/>
    <property type="project" value="UniProtKB"/>
</dbReference>
<dbReference type="GO" id="GO:0015333">
    <property type="term" value="F:peptide:proton symporter activity"/>
    <property type="evidence" value="ECO:0000250"/>
    <property type="project" value="UniProtKB"/>
</dbReference>
<dbReference type="GO" id="GO:0005427">
    <property type="term" value="F:proton-dependent oligopeptide secondary active transmembrane transporter activity"/>
    <property type="evidence" value="ECO:0000266"/>
    <property type="project" value="RGD"/>
</dbReference>
<dbReference type="GO" id="GO:0042937">
    <property type="term" value="F:tripeptide transmembrane transporter activity"/>
    <property type="evidence" value="ECO:0000266"/>
    <property type="project" value="RGD"/>
</dbReference>
<dbReference type="GO" id="GO:0140206">
    <property type="term" value="P:dipeptide import across plasma membrane"/>
    <property type="evidence" value="ECO:0000250"/>
    <property type="project" value="UniProtKB"/>
</dbReference>
<dbReference type="GO" id="GO:0072237">
    <property type="term" value="P:metanephric proximal tubule development"/>
    <property type="evidence" value="ECO:0000270"/>
    <property type="project" value="RGD"/>
</dbReference>
<dbReference type="GO" id="GO:0051956">
    <property type="term" value="P:negative regulation of amino acid transport"/>
    <property type="evidence" value="ECO:0000314"/>
    <property type="project" value="RGD"/>
</dbReference>
<dbReference type="GO" id="GO:0006857">
    <property type="term" value="P:oligopeptide transport"/>
    <property type="evidence" value="ECO:0000266"/>
    <property type="project" value="RGD"/>
</dbReference>
<dbReference type="GO" id="GO:0015031">
    <property type="term" value="P:protein transport"/>
    <property type="evidence" value="ECO:0007669"/>
    <property type="project" value="UniProtKB-KW"/>
</dbReference>
<dbReference type="FunFam" id="1.20.1250.20:FF:000049">
    <property type="entry name" value="Solute carrier family 15 member 2"/>
    <property type="match status" value="1"/>
</dbReference>
<dbReference type="FunFam" id="1.20.1250.20:FF:000205">
    <property type="entry name" value="Solute carrier family 15 oligopeptide transporter member 1"/>
    <property type="match status" value="1"/>
</dbReference>
<dbReference type="Gene3D" id="1.20.1250.20">
    <property type="entry name" value="MFS general substrate transporter like domains"/>
    <property type="match status" value="2"/>
</dbReference>
<dbReference type="InterPro" id="IPR036259">
    <property type="entry name" value="MFS_trans_sf"/>
</dbReference>
<dbReference type="InterPro" id="IPR004768">
    <property type="entry name" value="Oligopep_transport"/>
</dbReference>
<dbReference type="InterPro" id="IPR000109">
    <property type="entry name" value="POT_fam"/>
</dbReference>
<dbReference type="InterPro" id="IPR018456">
    <property type="entry name" value="PTR2_symporter_CS"/>
</dbReference>
<dbReference type="NCBIfam" id="TIGR00926">
    <property type="entry name" value="2A1704"/>
    <property type="match status" value="1"/>
</dbReference>
<dbReference type="PANTHER" id="PTHR11654">
    <property type="entry name" value="OLIGOPEPTIDE TRANSPORTER-RELATED"/>
    <property type="match status" value="1"/>
</dbReference>
<dbReference type="Pfam" id="PF00854">
    <property type="entry name" value="PTR2"/>
    <property type="match status" value="2"/>
</dbReference>
<dbReference type="SUPFAM" id="SSF103473">
    <property type="entry name" value="MFS general substrate transporter"/>
    <property type="match status" value="1"/>
</dbReference>
<dbReference type="PROSITE" id="PS01022">
    <property type="entry name" value="PTR2_1"/>
    <property type="match status" value="1"/>
</dbReference>
<dbReference type="PROSITE" id="PS01023">
    <property type="entry name" value="PTR2_2"/>
    <property type="match status" value="1"/>
</dbReference>
<comment type="function">
    <text evidence="1 2">Electrogenic proton-coupled amino-acid transporter that transports oligopeptides of 2 to 4 amino acids with a preference for dipeptides. Transports neutral and monovalently charged peptides with a proton to peptide stoichiometry of 1:1 or 2:1 (By similarity). Primarily responsible for the absorption of dietary di- and tripeptides from the small intestinal lumen (By similarity). Mediates transepithelial transport of muramyl and N-formylated bacterial dipeptides contributing to recognition of pathogenic bacteria by the mucosal immune system (By similarity).</text>
</comment>
<comment type="catalytic activity">
    <reaction evidence="2">
        <text>a dipeptide(out) + H(+)(out) = a dipeptide(in) + H(+)(in)</text>
        <dbReference type="Rhea" id="RHEA:64392"/>
        <dbReference type="ChEBI" id="CHEBI:15378"/>
        <dbReference type="ChEBI" id="CHEBI:90799"/>
    </reaction>
    <physiologicalReaction direction="left-to-right" evidence="2">
        <dbReference type="Rhea" id="RHEA:64393"/>
    </physiologicalReaction>
</comment>
<comment type="catalytic activity">
    <reaction evidence="2">
        <text>an L-amino acid tripeptide(out) + H(+)(out) = an L-amino acid tripeptide(in) + H(+)(in)</text>
        <dbReference type="Rhea" id="RHEA:64400"/>
        <dbReference type="ChEBI" id="CHEBI:15378"/>
        <dbReference type="ChEBI" id="CHEBI:155837"/>
    </reaction>
    <physiologicalReaction direction="left-to-right" evidence="2">
        <dbReference type="Rhea" id="RHEA:64401"/>
    </physiologicalReaction>
</comment>
<comment type="catalytic activity">
    <reaction evidence="2">
        <text>L-alanyl-L-lysine(out) + H(+)(out) = L-alanyl-L-lysine(in) + H(+)(in)</text>
        <dbReference type="Rhea" id="RHEA:72611"/>
        <dbReference type="ChEBI" id="CHEBI:15378"/>
        <dbReference type="ChEBI" id="CHEBI:192470"/>
    </reaction>
    <physiologicalReaction direction="left-to-right" evidence="2">
        <dbReference type="Rhea" id="RHEA:72612"/>
    </physiologicalReaction>
</comment>
<comment type="catalytic activity">
    <reaction evidence="2">
        <text>L-alanyl-L-proline(out) + H(+)(out) = L-alanyl-L-proline(in) + H(+)(in)</text>
        <dbReference type="Rhea" id="RHEA:64420"/>
        <dbReference type="ChEBI" id="CHEBI:15378"/>
        <dbReference type="ChEBI" id="CHEBI:155848"/>
    </reaction>
    <physiologicalReaction direction="left-to-right" evidence="2">
        <dbReference type="Rhea" id="RHEA:64421"/>
    </physiologicalReaction>
</comment>
<comment type="catalytic activity">
    <reaction evidence="2">
        <text>L-alanyl-L-valine(out) + H(+)(out) = L-alanyl-L-valine(in) + H(+)(in)</text>
        <dbReference type="Rhea" id="RHEA:72615"/>
        <dbReference type="ChEBI" id="CHEBI:15378"/>
        <dbReference type="ChEBI" id="CHEBI:192471"/>
    </reaction>
    <physiologicalReaction direction="left-to-right" evidence="1">
        <dbReference type="Rhea" id="RHEA:72616"/>
    </physiologicalReaction>
</comment>
<comment type="catalytic activity">
    <reaction evidence="1">
        <text>carnosine(out) + H(+)(out) = carnosine(in) + H(+)(in)</text>
        <dbReference type="Rhea" id="RHEA:64404"/>
        <dbReference type="ChEBI" id="CHEBI:15378"/>
        <dbReference type="ChEBI" id="CHEBI:57485"/>
    </reaction>
    <physiologicalReaction direction="left-to-right" evidence="1">
        <dbReference type="Rhea" id="RHEA:64405"/>
    </physiologicalReaction>
</comment>
<comment type="catalytic activity">
    <reaction evidence="1">
        <text>glycyl-L-glutamine(out) + H(+)(out) = glycyl-L-glutamine(in) + H(+)(in)</text>
        <dbReference type="Rhea" id="RHEA:71671"/>
        <dbReference type="ChEBI" id="CHEBI:15378"/>
        <dbReference type="ChEBI" id="CHEBI:74392"/>
    </reaction>
    <physiologicalReaction direction="left-to-right" evidence="1">
        <dbReference type="Rhea" id="RHEA:71672"/>
    </physiologicalReaction>
    <physiologicalReaction direction="right-to-left" evidence="1">
        <dbReference type="Rhea" id="RHEA:71673"/>
    </physiologicalReaction>
</comment>
<comment type="catalytic activity">
    <reaction evidence="1">
        <text>glycyl-L-leucine(out) + H(+)(out) = glycyl-L-leucine(in) + H(+)(in)</text>
        <dbReference type="Rhea" id="RHEA:71675"/>
        <dbReference type="ChEBI" id="CHEBI:15378"/>
        <dbReference type="ChEBI" id="CHEBI:143163"/>
    </reaction>
    <physiologicalReaction direction="left-to-right" evidence="1">
        <dbReference type="Rhea" id="RHEA:71676"/>
    </physiologicalReaction>
</comment>
<comment type="catalytic activity">
    <reaction evidence="2">
        <text>glycyl-L-proline(out) + H(+)(out) = glycyl-L-proline(in) + H(+)(in)</text>
        <dbReference type="Rhea" id="RHEA:64428"/>
        <dbReference type="ChEBI" id="CHEBI:15378"/>
        <dbReference type="ChEBI" id="CHEBI:73779"/>
    </reaction>
    <physiologicalReaction direction="left-to-right" evidence="2">
        <dbReference type="Rhea" id="RHEA:64429"/>
    </physiologicalReaction>
</comment>
<comment type="catalytic activity">
    <reaction evidence="2">
        <text>glycyl-sarcosine(out) + H(+)(out) = glycyl-sarcosine(in) + H(+)(in)</text>
        <dbReference type="Rhea" id="RHEA:64396"/>
        <dbReference type="ChEBI" id="CHEBI:15378"/>
        <dbReference type="ChEBI" id="CHEBI:155838"/>
    </reaction>
    <physiologicalReaction direction="left-to-right" evidence="2">
        <dbReference type="Rhea" id="RHEA:64397"/>
    </physiologicalReaction>
</comment>
<comment type="catalytic activity">
    <reaction evidence="1">
        <text>L-leucyl-L-leucine(out) + H(+)(out) = L-leucyl-L-leucine(in) + H(+)(in)</text>
        <dbReference type="Rhea" id="RHEA:71715"/>
        <dbReference type="ChEBI" id="CHEBI:15378"/>
        <dbReference type="ChEBI" id="CHEBI:191208"/>
    </reaction>
    <physiologicalReaction direction="left-to-right" evidence="1">
        <dbReference type="Rhea" id="RHEA:71716"/>
    </physiologicalReaction>
</comment>
<comment type="catalytic activity">
    <reaction evidence="2">
        <text>L-leucyl-L-proline(out) + H(+)(out) = L-leucyl-L-proline(in) + H(+)(in)</text>
        <dbReference type="Rhea" id="RHEA:64424"/>
        <dbReference type="ChEBI" id="CHEBI:15378"/>
        <dbReference type="ChEBI" id="CHEBI:155847"/>
    </reaction>
    <physiologicalReaction direction="left-to-right" evidence="2">
        <dbReference type="Rhea" id="RHEA:64425"/>
    </physiologicalReaction>
</comment>
<comment type="catalytic activity">
    <reaction evidence="1">
        <text>L-phenylalanyl-L-leucine(out) + H(+)(out) = L-phenylalanyl-L-leucine(in) + H(+)(in)</text>
        <dbReference type="Rhea" id="RHEA:71699"/>
        <dbReference type="ChEBI" id="CHEBI:15378"/>
        <dbReference type="ChEBI" id="CHEBI:190710"/>
    </reaction>
    <physiologicalReaction direction="left-to-right" evidence="1">
        <dbReference type="Rhea" id="RHEA:71700"/>
    </physiologicalReaction>
</comment>
<comment type="catalytic activity">
    <reaction evidence="1">
        <text>L-phenylalanyl-L-phenylalanine(out) + H(+)(out) = L-phenylalanyl-L-phenylalanine(in) + H(+)(in)</text>
        <dbReference type="Rhea" id="RHEA:71707"/>
        <dbReference type="ChEBI" id="CHEBI:15378"/>
        <dbReference type="ChEBI" id="CHEBI:191205"/>
    </reaction>
    <physiologicalReaction direction="left-to-right" evidence="1">
        <dbReference type="Rhea" id="RHEA:71708"/>
    </physiologicalReaction>
</comment>
<comment type="catalytic activity">
    <reaction evidence="1">
        <text>L-lysyl-glycine(out) + H(+)(out) = L-lysyl-glycine(in) + H(+)(in)</text>
        <dbReference type="Rhea" id="RHEA:71679"/>
        <dbReference type="ChEBI" id="CHEBI:15378"/>
        <dbReference type="ChEBI" id="CHEBI:191202"/>
    </reaction>
    <physiologicalReaction direction="left-to-right" evidence="1">
        <dbReference type="Rhea" id="RHEA:71680"/>
    </physiologicalReaction>
    <physiologicalReaction direction="right-to-left" evidence="1">
        <dbReference type="Rhea" id="RHEA:71681"/>
    </physiologicalReaction>
</comment>
<comment type="catalytic activity">
    <reaction evidence="1">
        <text>L-tyrosylglycine(out) + H(+)(out) = L-tyrosylglycine(in) + H(+)(in)</text>
        <dbReference type="Rhea" id="RHEA:71711"/>
        <dbReference type="ChEBI" id="CHEBI:15378"/>
        <dbReference type="ChEBI" id="CHEBI:191210"/>
    </reaction>
    <physiologicalReaction direction="left-to-right" evidence="1">
        <dbReference type="Rhea" id="RHEA:71712"/>
    </physiologicalReaction>
</comment>
<comment type="catalytic activity">
    <reaction evidence="1 2">
        <text>L-alanyl-L-aspartate(out) + 2 H(+)(out) = L-alanyl-L-aspartate(in) + 2 H(+)(in)</text>
        <dbReference type="Rhea" id="RHEA:71695"/>
        <dbReference type="ChEBI" id="CHEBI:15378"/>
        <dbReference type="ChEBI" id="CHEBI:74363"/>
    </reaction>
    <physiologicalReaction direction="left-to-right" evidence="1 2">
        <dbReference type="Rhea" id="RHEA:71696"/>
    </physiologicalReaction>
</comment>
<comment type="catalytic activity">
    <reaction evidence="1">
        <text>L-aspartyl-glycine(out) + 2 H(+)(out) = L-aspartyl-glycine(in) + 2 H(+)(in)</text>
        <dbReference type="Rhea" id="RHEA:71683"/>
        <dbReference type="ChEBI" id="CHEBI:15378"/>
        <dbReference type="ChEBI" id="CHEBI:191203"/>
    </reaction>
    <physiologicalReaction direction="left-to-right" evidence="1">
        <dbReference type="Rhea" id="RHEA:71684"/>
    </physiologicalReaction>
</comment>
<comment type="catalytic activity">
    <reaction evidence="1">
        <text>glycyl-L-aspartate(out) + 2 H(+)(out) = glycyl-L-aspartate(in) + 2 H(+)(in)</text>
        <dbReference type="Rhea" id="RHEA:71687"/>
        <dbReference type="ChEBI" id="CHEBI:15378"/>
        <dbReference type="ChEBI" id="CHEBI:191204"/>
    </reaction>
    <physiologicalReaction direction="left-to-right" evidence="1">
        <dbReference type="Rhea" id="RHEA:71688"/>
    </physiologicalReaction>
    <physiologicalReaction direction="right-to-left" evidence="1">
        <dbReference type="Rhea" id="RHEA:71689"/>
    </physiologicalReaction>
</comment>
<comment type="catalytic activity">
    <reaction evidence="1">
        <text>glycyl-L-glutamate(out) + 2 H(+)(out) = glycyl-L-glutamate(in) + 2 H(+)(in)</text>
        <dbReference type="Rhea" id="RHEA:71691"/>
        <dbReference type="ChEBI" id="CHEBI:15378"/>
        <dbReference type="ChEBI" id="CHEBI:73784"/>
    </reaction>
    <physiologicalReaction direction="left-to-right" evidence="1">
        <dbReference type="Rhea" id="RHEA:71692"/>
    </physiologicalReaction>
</comment>
<comment type="catalytic activity">
    <reaction evidence="1">
        <text>L-alanyl-L-leucyl-L-alanine(out) + H(+)(out) = L-alanyl-L-leucyl-L-alanine(in) + H(+)(in)</text>
        <dbReference type="Rhea" id="RHEA:71723"/>
        <dbReference type="ChEBI" id="CHEBI:15378"/>
        <dbReference type="ChEBI" id="CHEBI:191212"/>
    </reaction>
    <physiologicalReaction direction="left-to-right" evidence="1">
        <dbReference type="Rhea" id="RHEA:71724"/>
    </physiologicalReaction>
</comment>
<comment type="catalytic activity">
    <reaction evidence="2">
        <text>L-alanyl-L-prolylglycine(out) + H(+)(out) = L-alanyl-L-prolylglycine(in) + H(+)(in)</text>
        <dbReference type="Rhea" id="RHEA:64432"/>
        <dbReference type="ChEBI" id="CHEBI:15378"/>
        <dbReference type="ChEBI" id="CHEBI:155849"/>
    </reaction>
    <physiologicalReaction direction="left-to-right" evidence="2">
        <dbReference type="Rhea" id="RHEA:64433"/>
    </physiologicalReaction>
</comment>
<comment type="catalytic activity">
    <reaction evidence="2">
        <text>glycylglycyl-L-isoleucine(out) + H(+)(out) = glycylglycyl-L-isoleucine(in) + H(+)(in)</text>
        <dbReference type="Rhea" id="RHEA:64436"/>
        <dbReference type="ChEBI" id="CHEBI:15378"/>
        <dbReference type="ChEBI" id="CHEBI:155850"/>
    </reaction>
    <physiologicalReaction direction="left-to-right" evidence="2">
        <dbReference type="Rhea" id="RHEA:64437"/>
    </physiologicalReaction>
</comment>
<comment type="catalytic activity">
    <reaction evidence="2">
        <text>glycylglycyl-L-proline(out) + H(+)(out) = glycylglycyl-L-proline(in) + H(+)(in)</text>
        <dbReference type="Rhea" id="RHEA:64440"/>
        <dbReference type="ChEBI" id="CHEBI:15378"/>
        <dbReference type="ChEBI" id="CHEBI:155851"/>
    </reaction>
    <physiologicalReaction direction="left-to-right" evidence="2">
        <dbReference type="Rhea" id="RHEA:64441"/>
    </physiologicalReaction>
</comment>
<comment type="catalytic activity">
    <reaction evidence="1">
        <text>L-methionyl-L-phenylalanyl-L-methionine(out) + H(+)(out) = L-methionyl-L-phenylalanyl-L-methionine(in) + H(+)(in)</text>
        <dbReference type="Rhea" id="RHEA:71719"/>
        <dbReference type="ChEBI" id="CHEBI:15378"/>
        <dbReference type="ChEBI" id="CHEBI:191211"/>
    </reaction>
    <physiologicalReaction direction="left-to-right" evidence="1">
        <dbReference type="Rhea" id="RHEA:71720"/>
    </physiologicalReaction>
</comment>
<comment type="catalytic activity">
    <reaction evidence="2">
        <text>N-acetyl-D-muramoyl-L-alanyl-D-isoglutamine(out) + 2 H(+)(out) = N-acetyl-D-muramoyl-L-alanyl-D-isoglutamine(in) + 2 H(+)(in)</text>
        <dbReference type="Rhea" id="RHEA:64408"/>
        <dbReference type="ChEBI" id="CHEBI:15378"/>
        <dbReference type="ChEBI" id="CHEBI:155830"/>
    </reaction>
</comment>
<comment type="catalytic activity">
    <reaction evidence="2">
        <text>N(alpha)-formyl-L-methionyl-L-leucyl-L-phenylalanine(out) + 2 H(+)(out) = N(alpha)-formyl-L-methionyl-L-leucyl-L-phenylalanine(in) + 2 H(+)(in)</text>
        <dbReference type="Rhea" id="RHEA:75399"/>
        <dbReference type="ChEBI" id="CHEBI:15378"/>
        <dbReference type="ChEBI" id="CHEBI:194314"/>
    </reaction>
</comment>
<comment type="subunit">
    <text evidence="3">Interacts (via extracellular domain region) with trypsin.</text>
</comment>
<comment type="subcellular location">
    <subcellularLocation>
        <location evidence="2">Apical cell membrane</location>
        <topology evidence="4">Multi-pass membrane protein</topology>
    </subcellularLocation>
    <text evidence="2">Localized to the apical membrane of enterocytes.</text>
</comment>
<comment type="alternative products">
    <event type="alternative promoter"/>
    <isoform>
        <id>P51574-1</id>
        <name>1</name>
        <sequence type="displayed"/>
    </isoform>
    <isoform>
        <id>P51574-2</id>
        <name>2</name>
        <name>pgPepT1</name>
        <sequence type="described" ref="VSP_042081 VSP_042082"/>
    </isoform>
</comment>
<comment type="tissue specificity">
    <molecule>Isoform 1</molecule>
    <text evidence="8 9">Highly expressed in small intestine.</text>
</comment>
<comment type="tissue specificity">
    <molecule>Isoform 2</molecule>
    <text evidence="6 7">Expression is restricted to pinealocytes.</text>
</comment>
<comment type="induction">
    <molecule>Isoform 2</molecule>
    <text evidence="6 7">Exhibits night/day variations with close to 100-fold increased expression at night (PubMed:15684415, PubMed:19103603). Up-regulation is due to a large degree to the release of norepinephrine from nerve terminals in the pineal gland and cAMP signaling pathway, which activates an alternative promoter within intron 20 resulting in isoform 2 production (PubMed:15684415, PubMed:19103603). Levels rapidly decrease after exposure to daylight and become undetectable at midday and late afternoon (PubMed:15684415, PubMed:19103603).</text>
</comment>
<comment type="domain">
    <text evidence="3">The extracellular domain (ECD) region specifically binds trypsin.</text>
</comment>
<comment type="similarity">
    <text evidence="12">Belongs to the major facilitator superfamily. Proton-dependent oligopeptide transporter (POT/PTR) (TC 2.A.17) family.</text>
</comment>
<feature type="chain" id="PRO_0000064307" description="Solute carrier family 15 member 1">
    <location>
        <begin position="1"/>
        <end position="710"/>
    </location>
</feature>
<feature type="transmembrane region" description="Helical" evidence="4">
    <location>
        <begin position="1"/>
        <end position="21"/>
    </location>
</feature>
<feature type="topological domain" description="Extracellular" evidence="4">
    <location>
        <begin position="22"/>
        <end position="53"/>
    </location>
</feature>
<feature type="transmembrane region" description="Helical" evidence="4">
    <location>
        <begin position="54"/>
        <end position="74"/>
    </location>
</feature>
<feature type="topological domain" description="Cytoplasmic" evidence="4">
    <location>
        <begin position="75"/>
        <end position="82"/>
    </location>
</feature>
<feature type="transmembrane region" description="Helical" evidence="4">
    <location>
        <begin position="83"/>
        <end position="103"/>
    </location>
</feature>
<feature type="topological domain" description="Extracellular" evidence="4">
    <location>
        <begin position="104"/>
        <end position="118"/>
    </location>
</feature>
<feature type="transmembrane region" description="Helical" evidence="4">
    <location>
        <begin position="119"/>
        <end position="139"/>
    </location>
</feature>
<feature type="topological domain" description="Cytoplasmic" evidence="4">
    <location>
        <begin position="140"/>
        <end position="161"/>
    </location>
</feature>
<feature type="transmembrane region" description="Helical" evidence="4">
    <location>
        <begin position="162"/>
        <end position="182"/>
    </location>
</feature>
<feature type="topological domain" description="Extracellular" evidence="4">
    <location>
        <begin position="183"/>
        <end position="198"/>
    </location>
</feature>
<feature type="transmembrane region" description="Helical" evidence="4">
    <location>
        <begin position="199"/>
        <end position="219"/>
    </location>
</feature>
<feature type="topological domain" description="Cytoplasmic" evidence="4">
    <location>
        <begin position="220"/>
        <end position="276"/>
    </location>
</feature>
<feature type="transmembrane region" description="Helical" evidence="4">
    <location>
        <begin position="277"/>
        <end position="297"/>
    </location>
</feature>
<feature type="topological domain" description="Extracellular" evidence="4">
    <location>
        <begin position="298"/>
        <end position="327"/>
    </location>
</feature>
<feature type="transmembrane region" description="Helical" evidence="4">
    <location>
        <begin position="328"/>
        <end position="348"/>
    </location>
</feature>
<feature type="topological domain" description="Cytoplasmic" evidence="4">
    <location>
        <begin position="349"/>
        <end position="361"/>
    </location>
</feature>
<feature type="transmembrane region" description="Helical" evidence="4">
    <location>
        <begin position="362"/>
        <end position="382"/>
    </location>
</feature>
<feature type="topological domain" description="Extracellular" evidence="4">
    <location>
        <begin position="383"/>
        <end position="586"/>
    </location>
</feature>
<feature type="transmembrane region" description="Helical" evidence="4">
    <location>
        <begin position="587"/>
        <end position="607"/>
    </location>
</feature>
<feature type="topological domain" description="Cytoplasmic" evidence="4">
    <location>
        <begin position="608"/>
        <end position="621"/>
    </location>
</feature>
<feature type="transmembrane region" description="Helical" evidence="4">
    <location>
        <begin position="622"/>
        <end position="642"/>
    </location>
</feature>
<feature type="topological domain" description="Extracellular" evidence="4">
    <location>
        <begin position="643"/>
        <end position="647"/>
    </location>
</feature>
<feature type="transmembrane region" description="Helical" evidence="4">
    <location>
        <begin position="648"/>
        <end position="668"/>
    </location>
</feature>
<feature type="topological domain" description="Cytoplasmic" evidence="4">
    <location>
        <begin position="669"/>
        <end position="710"/>
    </location>
</feature>
<feature type="region of interest" description="Extracellular domain (ECD)" evidence="3">
    <location>
        <begin position="383"/>
        <end position="586"/>
    </location>
</feature>
<feature type="region of interest" description="Disordered" evidence="5">
    <location>
        <begin position="687"/>
        <end position="710"/>
    </location>
</feature>
<feature type="compositionally biased region" description="Polar residues" evidence="5">
    <location>
        <begin position="698"/>
        <end position="710"/>
    </location>
</feature>
<feature type="glycosylation site" description="N-linked (GlcNAc...) asparagine" evidence="4">
    <location>
        <position position="415"/>
    </location>
</feature>
<feature type="glycosylation site" description="N-linked (GlcNAc...) asparagine" evidence="4">
    <location>
        <position position="439"/>
    </location>
</feature>
<feature type="glycosylation site" description="N-linked (GlcNAc...) asparagine" evidence="4">
    <location>
        <position position="510"/>
    </location>
</feature>
<feature type="glycosylation site" description="N-linked (GlcNAc...) asparagine" evidence="4">
    <location>
        <position position="532"/>
    </location>
</feature>
<feature type="glycosylation site" description="N-linked (GlcNAc...) asparagine" evidence="4">
    <location>
        <position position="539"/>
    </location>
</feature>
<feature type="splice variant" id="VSP_042081" description="In isoform 2." evidence="10">
    <location>
        <begin position="1"/>
        <end position="560"/>
    </location>
</feature>
<feature type="splice variant" id="VSP_042082" description="In isoform 2." evidence="10">
    <original>SRA</original>
    <variation>MVQ</variation>
    <location>
        <begin position="561"/>
        <end position="563"/>
    </location>
</feature>
<feature type="sequence conflict" description="In Ref. 2; BAA08844." evidence="12" ref="2">
    <original>R</original>
    <variation>G</variation>
    <location>
        <position position="241"/>
    </location>
</feature>
<feature type="sequence conflict" description="In Ref. 2; BAA08844." evidence="12" ref="2">
    <original>N</original>
    <variation>E</variation>
    <location>
        <position position="259"/>
    </location>
</feature>
<feature type="sequence conflict" description="In Ref. 2; BAA08844." evidence="12" ref="2">
    <original>IM</original>
    <variation>MV</variation>
    <location>
        <begin position="279"/>
        <end position="280"/>
    </location>
</feature>
<protein>
    <recommendedName>
        <fullName>Solute carrier family 15 member 1</fullName>
    </recommendedName>
    <alternativeName>
        <fullName evidence="11">Intestinal H(+)/peptide cotransporter</fullName>
    </alternativeName>
    <alternativeName>
        <fullName evidence="11">Oligopeptide transporter, small intestine isoform</fullName>
    </alternativeName>
    <alternativeName>
        <fullName evidence="11">Peptide transporter 1</fullName>
    </alternativeName>
    <alternativeName>
        <fullName>Proton-coupled dipeptide cotransporter</fullName>
    </alternativeName>
</protein>
<proteinExistence type="evidence at transcript level"/>
<keyword id="KW-0877">Alternative promoter usage</keyword>
<keyword id="KW-1003">Cell membrane</keyword>
<keyword id="KW-0325">Glycoprotein</keyword>
<keyword id="KW-0472">Membrane</keyword>
<keyword id="KW-0571">Peptide transport</keyword>
<keyword id="KW-0653">Protein transport</keyword>
<keyword id="KW-1185">Reference proteome</keyword>
<keyword id="KW-0769">Symport</keyword>
<keyword id="KW-0812">Transmembrane</keyword>
<keyword id="KW-1133">Transmembrane helix</keyword>
<keyword id="KW-0813">Transport</keyword>
<reference key="1">
    <citation type="journal article" date="1996" name="Biochim. Biophys. Acta">
        <title>Sequence, tissue distribution and developmental changes in rat intestinal oligopeptide transporter.</title>
        <authorList>
            <person name="Miyamoto K."/>
            <person name="Shiraga T."/>
            <person name="Morita K."/>
            <person name="Yamamoto H."/>
            <person name="Haga H."/>
            <person name="Taketani Y."/>
            <person name="Tamai I."/>
            <person name="Sai Y."/>
            <person name="Tsuji A."/>
            <person name="Takeda E."/>
        </authorList>
    </citation>
    <scope>NUCLEOTIDE SEQUENCE [MRNA] (ISOFORM 1)</scope>
    <scope>TISSUE SPECIFICITY</scope>
    <source>
        <strain>Sprague-Dawley</strain>
        <tissue>Small intestine</tissue>
    </source>
</reference>
<reference key="2">
    <citation type="journal article" date="1995" name="J. Pharmacol. Exp. Ther.">
        <title>Cloning and characterization of a rat H+/peptide cotransporter mediating absorption of beta-lactam antibiotics in the intestine and kidney.</title>
        <authorList>
            <person name="Saito H."/>
            <person name="Okuda M."/>
            <person name="Terada T."/>
            <person name="Sasaki S."/>
            <person name="Inui K."/>
        </authorList>
    </citation>
    <scope>NUCLEOTIDE SEQUENCE [MRNA] (ISOFORM 1)</scope>
    <scope>TISSUE SPECIFICITY</scope>
    <source>
        <strain>Sprague-Dawley</strain>
        <tissue>Kidney</tissue>
    </source>
</reference>
<reference key="3">
    <citation type="journal article" date="2005" name="J. Biol. Chem.">
        <title>A novel pineal-specific product of the oligopeptide transporter PepT1 gene: circadian expression mediated by cAMP activation of an intronic promoter.</title>
        <authorList>
            <person name="Gaildrat P."/>
            <person name="Moller M."/>
            <person name="Mukda S."/>
            <person name="Humphries A."/>
            <person name="Carter D.A."/>
            <person name="Ganapathy V."/>
            <person name="Klein D.C."/>
        </authorList>
    </citation>
    <scope>NUCLEOTIDE SEQUENCE [MRNA] (ISOFORM 2)</scope>
    <scope>ALTERNATIVE PROMOTER USAGE</scope>
    <scope>TISSUE SPECIFICITY</scope>
    <scope>INDUCTION</scope>
</reference>
<reference key="4">
    <citation type="journal article" date="2009" name="J. Biol. Chem.">
        <title>Night/day changes in pineal expression of &gt;600 genes: central role of adrenergic/cAMP signaling.</title>
        <authorList>
            <person name="Bailey M.J."/>
            <person name="Coon S.L."/>
            <person name="Carter D.A."/>
            <person name="Humphries A."/>
            <person name="Kim J.S."/>
            <person name="Shi Q."/>
            <person name="Gaildrat P."/>
            <person name="Morin F."/>
            <person name="Ganguly S."/>
            <person name="Hogenesch J.B."/>
            <person name="Weller J.L."/>
            <person name="Rath M.F."/>
            <person name="Moller M."/>
            <person name="Baler R."/>
            <person name="Sugden D."/>
            <person name="Rangel Z.G."/>
            <person name="Munson P.J."/>
            <person name="Klein D.C."/>
        </authorList>
    </citation>
    <scope>TISSUE SPECIFICITY</scope>
    <scope>INDUCTION</scope>
</reference>
<accession>P51574</accession>
<accession>Q5EML1</accession>